<sequence>MNRQSVLRLARQTGAFPLAELPPPYLAPSLHFSMNRSTVQCSNFSSTAAVAAGRGDLNKVRGVSAIHRTGPKYKLGVSKYPLPKPVSPDALPKRNATPDHGLWGFFPTDRTALSTPTYDIECGRSWSIQELREKSWDDLHSLWWVCVKERNRIATSDMERKRLKAGYGEWESSERDRVIRVTQNGIKHVLRERWYAWEEAQRLYRKGYRPQEDSQEAIWEMRADSVSNSQGAGQLLVVSKAEDMIDPLRHDRWEKGQEENSGGETEDGNAPSN</sequence>
<reference key="1">
    <citation type="journal article" date="2007" name="Nat. Biotechnol.">
        <title>Genome sequencing and analysis of the versatile cell factory Aspergillus niger CBS 513.88.</title>
        <authorList>
            <person name="Pel H.J."/>
            <person name="de Winde J.H."/>
            <person name="Archer D.B."/>
            <person name="Dyer P.S."/>
            <person name="Hofmann G."/>
            <person name="Schaap P.J."/>
            <person name="Turner G."/>
            <person name="de Vries R.P."/>
            <person name="Albang R."/>
            <person name="Albermann K."/>
            <person name="Andersen M.R."/>
            <person name="Bendtsen J.D."/>
            <person name="Benen J.A.E."/>
            <person name="van den Berg M."/>
            <person name="Breestraat S."/>
            <person name="Caddick M.X."/>
            <person name="Contreras R."/>
            <person name="Cornell M."/>
            <person name="Coutinho P.M."/>
            <person name="Danchin E.G.J."/>
            <person name="Debets A.J.M."/>
            <person name="Dekker P."/>
            <person name="van Dijck P.W.M."/>
            <person name="van Dijk A."/>
            <person name="Dijkhuizen L."/>
            <person name="Driessen A.J.M."/>
            <person name="d'Enfert C."/>
            <person name="Geysens S."/>
            <person name="Goosen C."/>
            <person name="Groot G.S.P."/>
            <person name="de Groot P.W.J."/>
            <person name="Guillemette T."/>
            <person name="Henrissat B."/>
            <person name="Herweijer M."/>
            <person name="van den Hombergh J.P.T.W."/>
            <person name="van den Hondel C.A.M.J.J."/>
            <person name="van der Heijden R.T.J.M."/>
            <person name="van der Kaaij R.M."/>
            <person name="Klis F.M."/>
            <person name="Kools H.J."/>
            <person name="Kubicek C.P."/>
            <person name="van Kuyk P.A."/>
            <person name="Lauber J."/>
            <person name="Lu X."/>
            <person name="van der Maarel M.J.E.C."/>
            <person name="Meulenberg R."/>
            <person name="Menke H."/>
            <person name="Mortimer M.A."/>
            <person name="Nielsen J."/>
            <person name="Oliver S.G."/>
            <person name="Olsthoorn M."/>
            <person name="Pal K."/>
            <person name="van Peij N.N.M.E."/>
            <person name="Ram A.F.J."/>
            <person name="Rinas U."/>
            <person name="Roubos J.A."/>
            <person name="Sagt C.M.J."/>
            <person name="Schmoll M."/>
            <person name="Sun J."/>
            <person name="Ussery D."/>
            <person name="Varga J."/>
            <person name="Vervecken W."/>
            <person name="van de Vondervoort P.J.J."/>
            <person name="Wedler H."/>
            <person name="Woesten H.A.B."/>
            <person name="Zeng A.-P."/>
            <person name="van Ooyen A.J.J."/>
            <person name="Visser J."/>
            <person name="Stam H."/>
        </authorList>
    </citation>
    <scope>NUCLEOTIDE SEQUENCE [LARGE SCALE GENOMIC DNA]</scope>
    <source>
        <strain>ATCC MYA-4892 / CBS 513.88 / FGSC A1513</strain>
    </source>
</reference>
<keyword id="KW-0496">Mitochondrion</keyword>
<keyword id="KW-1185">Reference proteome</keyword>
<keyword id="KW-0687">Ribonucleoprotein</keyword>
<keyword id="KW-0689">Ribosomal protein</keyword>
<keyword id="KW-0809">Transit peptide</keyword>
<gene>
    <name type="primary">mrpl4</name>
    <name type="ORF">An02g03110</name>
</gene>
<feature type="transit peptide" description="Mitochondrion" evidence="2">
    <location>
        <begin position="1"/>
        <end status="unknown"/>
    </location>
</feature>
<feature type="chain" id="PRO_0000372392" description="Large ribosomal subunit protein uL29m">
    <location>
        <begin status="unknown"/>
        <end position="273"/>
    </location>
</feature>
<feature type="region of interest" description="Disordered" evidence="3">
    <location>
        <begin position="247"/>
        <end position="273"/>
    </location>
</feature>
<feature type="compositionally biased region" description="Basic and acidic residues" evidence="3">
    <location>
        <begin position="247"/>
        <end position="258"/>
    </location>
</feature>
<dbReference type="EMBL" id="AM270003">
    <property type="protein sequence ID" value="CAK47591.1"/>
    <property type="molecule type" value="Genomic_DNA"/>
</dbReference>
<dbReference type="RefSeq" id="XP_001399447.2">
    <property type="nucleotide sequence ID" value="XM_001399410.2"/>
</dbReference>
<dbReference type="SMR" id="A2QCC7"/>
<dbReference type="EnsemblFungi" id="CAK47591">
    <property type="protein sequence ID" value="CAK47591"/>
    <property type="gene ID" value="An02g03110"/>
</dbReference>
<dbReference type="GeneID" id="4978797"/>
<dbReference type="KEGG" id="ang:An02g03110"/>
<dbReference type="HOGENOM" id="CLU_063281_0_0_1"/>
<dbReference type="Proteomes" id="UP000006706">
    <property type="component" value="Chromosome 4R"/>
</dbReference>
<dbReference type="GO" id="GO:0005762">
    <property type="term" value="C:mitochondrial large ribosomal subunit"/>
    <property type="evidence" value="ECO:0007669"/>
    <property type="project" value="TreeGrafter"/>
</dbReference>
<dbReference type="GO" id="GO:0003735">
    <property type="term" value="F:structural constituent of ribosome"/>
    <property type="evidence" value="ECO:0007669"/>
    <property type="project" value="InterPro"/>
</dbReference>
<dbReference type="GO" id="GO:0032543">
    <property type="term" value="P:mitochondrial translation"/>
    <property type="evidence" value="ECO:0007669"/>
    <property type="project" value="TreeGrafter"/>
</dbReference>
<dbReference type="Gene3D" id="6.10.330.20">
    <property type="match status" value="1"/>
</dbReference>
<dbReference type="InterPro" id="IPR038340">
    <property type="entry name" value="MRP-L47_sf"/>
</dbReference>
<dbReference type="InterPro" id="IPR010729">
    <property type="entry name" value="Ribosomal_uL29_mit"/>
</dbReference>
<dbReference type="PANTHER" id="PTHR21183:SF18">
    <property type="entry name" value="LARGE RIBOSOMAL SUBUNIT PROTEIN UL29M"/>
    <property type="match status" value="1"/>
</dbReference>
<dbReference type="PANTHER" id="PTHR21183">
    <property type="entry name" value="RIBOSOMAL PROTEIN L47, MITOCHONDRIAL-RELATED"/>
    <property type="match status" value="1"/>
</dbReference>
<dbReference type="Pfam" id="PF06984">
    <property type="entry name" value="MRP-L47"/>
    <property type="match status" value="1"/>
</dbReference>
<protein>
    <recommendedName>
        <fullName evidence="4">Large ribosomal subunit protein uL29m</fullName>
    </recommendedName>
    <alternativeName>
        <fullName>54S ribosomal protein L4, mitochondrial</fullName>
    </alternativeName>
</protein>
<organism>
    <name type="scientific">Aspergillus niger (strain ATCC MYA-4892 / CBS 513.88 / FGSC A1513)</name>
    <dbReference type="NCBI Taxonomy" id="425011"/>
    <lineage>
        <taxon>Eukaryota</taxon>
        <taxon>Fungi</taxon>
        <taxon>Dikarya</taxon>
        <taxon>Ascomycota</taxon>
        <taxon>Pezizomycotina</taxon>
        <taxon>Eurotiomycetes</taxon>
        <taxon>Eurotiomycetidae</taxon>
        <taxon>Eurotiales</taxon>
        <taxon>Aspergillaceae</taxon>
        <taxon>Aspergillus</taxon>
        <taxon>Aspergillus subgen. Circumdati</taxon>
    </lineage>
</organism>
<comment type="subunit">
    <text evidence="1">Component of the mitochondrial large ribosomal subunit. Mature mitochondrial ribosomes consist of a small (37S) and a large (54S) subunit. The 37S subunit contains at least 33 different proteins and 1 molecule of RNA (15S). The 54S subunit contains at least 45 different proteins and 1 molecule of RNA (21S) (By similarity).</text>
</comment>
<comment type="subcellular location">
    <subcellularLocation>
        <location evidence="1">Mitochondrion</location>
    </subcellularLocation>
</comment>
<comment type="similarity">
    <text evidence="4">Belongs to the universal ribosomal protein uL29 family.</text>
</comment>
<evidence type="ECO:0000250" key="1"/>
<evidence type="ECO:0000255" key="2"/>
<evidence type="ECO:0000256" key="3">
    <source>
        <dbReference type="SAM" id="MobiDB-lite"/>
    </source>
</evidence>
<evidence type="ECO:0000305" key="4"/>
<proteinExistence type="inferred from homology"/>
<accession>A2QCC7</accession>
<name>RM04_ASPNC</name>